<reference key="1">
    <citation type="journal article" date="2003" name="Proc. Natl. Acad. Sci. U.S.A.">
        <title>Complete genome sequence and analysis of Wolinella succinogenes.</title>
        <authorList>
            <person name="Baar C."/>
            <person name="Eppinger M."/>
            <person name="Raddatz G."/>
            <person name="Simon J."/>
            <person name="Lanz C."/>
            <person name="Klimmek O."/>
            <person name="Nandakumar R."/>
            <person name="Gross R."/>
            <person name="Rosinus A."/>
            <person name="Keller H."/>
            <person name="Jagtap P."/>
            <person name="Linke B."/>
            <person name="Meyer F."/>
            <person name="Lederer H."/>
            <person name="Schuster S.C."/>
        </authorList>
    </citation>
    <scope>NUCLEOTIDE SEQUENCE [LARGE SCALE GENOMIC DNA]</scope>
    <source>
        <strain>ATCC 29543 / DSM 1740 / CCUG 13145 / JCM 31913 / LMG 7466 / NCTC 11488 / FDC 602W</strain>
    </source>
</reference>
<name>DAPB_WOLSU</name>
<proteinExistence type="inferred from homology"/>
<dbReference type="EC" id="1.17.1.8" evidence="1"/>
<dbReference type="EMBL" id="BX571658">
    <property type="protein sequence ID" value="CAE09597.1"/>
    <property type="molecule type" value="Genomic_DNA"/>
</dbReference>
<dbReference type="RefSeq" id="WP_011138397.1">
    <property type="nucleotide sequence ID" value="NC_005090.1"/>
</dbReference>
<dbReference type="SMR" id="Q7MA63"/>
<dbReference type="STRING" id="273121.WS0455"/>
<dbReference type="KEGG" id="wsu:WS0455"/>
<dbReference type="eggNOG" id="COG0289">
    <property type="taxonomic scope" value="Bacteria"/>
</dbReference>
<dbReference type="HOGENOM" id="CLU_047479_2_1_7"/>
<dbReference type="UniPathway" id="UPA00034">
    <property type="reaction ID" value="UER00018"/>
</dbReference>
<dbReference type="Proteomes" id="UP000000422">
    <property type="component" value="Chromosome"/>
</dbReference>
<dbReference type="GO" id="GO:0005829">
    <property type="term" value="C:cytosol"/>
    <property type="evidence" value="ECO:0007669"/>
    <property type="project" value="TreeGrafter"/>
</dbReference>
<dbReference type="GO" id="GO:0008839">
    <property type="term" value="F:4-hydroxy-tetrahydrodipicolinate reductase"/>
    <property type="evidence" value="ECO:0007669"/>
    <property type="project" value="UniProtKB-EC"/>
</dbReference>
<dbReference type="GO" id="GO:0051287">
    <property type="term" value="F:NAD binding"/>
    <property type="evidence" value="ECO:0007669"/>
    <property type="project" value="UniProtKB-UniRule"/>
</dbReference>
<dbReference type="GO" id="GO:0050661">
    <property type="term" value="F:NADP binding"/>
    <property type="evidence" value="ECO:0007669"/>
    <property type="project" value="UniProtKB-UniRule"/>
</dbReference>
<dbReference type="GO" id="GO:0016726">
    <property type="term" value="F:oxidoreductase activity, acting on CH or CH2 groups, NAD or NADP as acceptor"/>
    <property type="evidence" value="ECO:0007669"/>
    <property type="project" value="UniProtKB-UniRule"/>
</dbReference>
<dbReference type="GO" id="GO:0019877">
    <property type="term" value="P:diaminopimelate biosynthetic process"/>
    <property type="evidence" value="ECO:0007669"/>
    <property type="project" value="UniProtKB-UniRule"/>
</dbReference>
<dbReference type="GO" id="GO:0009089">
    <property type="term" value="P:lysine biosynthetic process via diaminopimelate"/>
    <property type="evidence" value="ECO:0007669"/>
    <property type="project" value="UniProtKB-UniRule"/>
</dbReference>
<dbReference type="CDD" id="cd02274">
    <property type="entry name" value="DHDPR_N"/>
    <property type="match status" value="1"/>
</dbReference>
<dbReference type="FunFam" id="3.30.360.10:FF:000004">
    <property type="entry name" value="4-hydroxy-tetrahydrodipicolinate reductase"/>
    <property type="match status" value="1"/>
</dbReference>
<dbReference type="Gene3D" id="3.30.360.10">
    <property type="entry name" value="Dihydrodipicolinate Reductase, domain 2"/>
    <property type="match status" value="1"/>
</dbReference>
<dbReference type="Gene3D" id="3.40.50.720">
    <property type="entry name" value="NAD(P)-binding Rossmann-like Domain"/>
    <property type="match status" value="1"/>
</dbReference>
<dbReference type="HAMAP" id="MF_00102">
    <property type="entry name" value="DapB"/>
    <property type="match status" value="1"/>
</dbReference>
<dbReference type="InterPro" id="IPR022663">
    <property type="entry name" value="DapB_C"/>
</dbReference>
<dbReference type="InterPro" id="IPR000846">
    <property type="entry name" value="DapB_N"/>
</dbReference>
<dbReference type="InterPro" id="IPR022664">
    <property type="entry name" value="DapB_N_CS"/>
</dbReference>
<dbReference type="InterPro" id="IPR023940">
    <property type="entry name" value="DHDPR_bac"/>
</dbReference>
<dbReference type="InterPro" id="IPR036291">
    <property type="entry name" value="NAD(P)-bd_dom_sf"/>
</dbReference>
<dbReference type="NCBIfam" id="TIGR00036">
    <property type="entry name" value="dapB"/>
    <property type="match status" value="1"/>
</dbReference>
<dbReference type="PANTHER" id="PTHR20836:SF0">
    <property type="entry name" value="4-HYDROXY-TETRAHYDRODIPICOLINATE REDUCTASE 1, CHLOROPLASTIC-RELATED"/>
    <property type="match status" value="1"/>
</dbReference>
<dbReference type="PANTHER" id="PTHR20836">
    <property type="entry name" value="DIHYDRODIPICOLINATE REDUCTASE"/>
    <property type="match status" value="1"/>
</dbReference>
<dbReference type="Pfam" id="PF05173">
    <property type="entry name" value="DapB_C"/>
    <property type="match status" value="1"/>
</dbReference>
<dbReference type="Pfam" id="PF01113">
    <property type="entry name" value="DapB_N"/>
    <property type="match status" value="1"/>
</dbReference>
<dbReference type="PIRSF" id="PIRSF000161">
    <property type="entry name" value="DHPR"/>
    <property type="match status" value="1"/>
</dbReference>
<dbReference type="SUPFAM" id="SSF55347">
    <property type="entry name" value="Glyceraldehyde-3-phosphate dehydrogenase-like, C-terminal domain"/>
    <property type="match status" value="1"/>
</dbReference>
<dbReference type="SUPFAM" id="SSF51735">
    <property type="entry name" value="NAD(P)-binding Rossmann-fold domains"/>
    <property type="match status" value="1"/>
</dbReference>
<dbReference type="PROSITE" id="PS01298">
    <property type="entry name" value="DAPB"/>
    <property type="match status" value="1"/>
</dbReference>
<sequence length="256" mass="27555">MNRIGVFGATGRVGKLLVELLGSDENAKLSSVFVRKELDFSMPPGALVTNDYKTFLEGCDVVIDFSLPDATAALLETAMQGHPKPLVIGTTGLDAHHFNLIHEASRQMPVLYATNMSLGVAILNKMVHTAAKALADFDIEIVEMHHRHKKDSPSGTALTLAESCAKARGVELDEVRVSGRNGNIGERKSEEIAVMSLRGGDIAGKHTVGFYSEGEYLEFVHTATSRMTFAKGALRAAKWLAKQESGLYGISDALGI</sequence>
<accession>Q7MA63</accession>
<gene>
    <name evidence="1" type="primary">dapB</name>
    <name type="ordered locus">WS0455</name>
</gene>
<evidence type="ECO:0000255" key="1">
    <source>
        <dbReference type="HAMAP-Rule" id="MF_00102"/>
    </source>
</evidence>
<evidence type="ECO:0000305" key="2"/>
<keyword id="KW-0028">Amino-acid biosynthesis</keyword>
<keyword id="KW-0963">Cytoplasm</keyword>
<keyword id="KW-0220">Diaminopimelate biosynthesis</keyword>
<keyword id="KW-0457">Lysine biosynthesis</keyword>
<keyword id="KW-0520">NAD</keyword>
<keyword id="KW-0521">NADP</keyword>
<keyword id="KW-0560">Oxidoreductase</keyword>
<keyword id="KW-1185">Reference proteome</keyword>
<feature type="chain" id="PRO_0000141509" description="4-hydroxy-tetrahydrodipicolinate reductase">
    <location>
        <begin position="1"/>
        <end position="256"/>
    </location>
</feature>
<feature type="active site" description="Proton donor/acceptor" evidence="1">
    <location>
        <position position="145"/>
    </location>
</feature>
<feature type="active site" description="Proton donor" evidence="1">
    <location>
        <position position="149"/>
    </location>
</feature>
<feature type="binding site" evidence="1">
    <location>
        <begin position="8"/>
        <end position="13"/>
    </location>
    <ligand>
        <name>NAD(+)</name>
        <dbReference type="ChEBI" id="CHEBI:57540"/>
    </ligand>
</feature>
<feature type="binding site" evidence="1">
    <location>
        <position position="36"/>
    </location>
    <ligand>
        <name>NADP(+)</name>
        <dbReference type="ChEBI" id="CHEBI:58349"/>
    </ligand>
</feature>
<feature type="binding site" evidence="1">
    <location>
        <begin position="89"/>
        <end position="91"/>
    </location>
    <ligand>
        <name>NAD(+)</name>
        <dbReference type="ChEBI" id="CHEBI:57540"/>
    </ligand>
</feature>
<feature type="binding site" evidence="1">
    <location>
        <begin position="113"/>
        <end position="116"/>
    </location>
    <ligand>
        <name>NAD(+)</name>
        <dbReference type="ChEBI" id="CHEBI:57540"/>
    </ligand>
</feature>
<feature type="binding site" evidence="1">
    <location>
        <position position="146"/>
    </location>
    <ligand>
        <name>(S)-2,3,4,5-tetrahydrodipicolinate</name>
        <dbReference type="ChEBI" id="CHEBI:16845"/>
    </ligand>
</feature>
<feature type="binding site" evidence="1">
    <location>
        <begin position="155"/>
        <end position="156"/>
    </location>
    <ligand>
        <name>(S)-2,3,4,5-tetrahydrodipicolinate</name>
        <dbReference type="ChEBI" id="CHEBI:16845"/>
    </ligand>
</feature>
<comment type="function">
    <text evidence="1">Catalyzes the conversion of 4-hydroxy-tetrahydrodipicolinate (HTPA) to tetrahydrodipicolinate.</text>
</comment>
<comment type="catalytic activity">
    <reaction evidence="1">
        <text>(S)-2,3,4,5-tetrahydrodipicolinate + NAD(+) + H2O = (2S,4S)-4-hydroxy-2,3,4,5-tetrahydrodipicolinate + NADH + H(+)</text>
        <dbReference type="Rhea" id="RHEA:35323"/>
        <dbReference type="ChEBI" id="CHEBI:15377"/>
        <dbReference type="ChEBI" id="CHEBI:15378"/>
        <dbReference type="ChEBI" id="CHEBI:16845"/>
        <dbReference type="ChEBI" id="CHEBI:57540"/>
        <dbReference type="ChEBI" id="CHEBI:57945"/>
        <dbReference type="ChEBI" id="CHEBI:67139"/>
        <dbReference type="EC" id="1.17.1.8"/>
    </reaction>
</comment>
<comment type="catalytic activity">
    <reaction evidence="1">
        <text>(S)-2,3,4,5-tetrahydrodipicolinate + NADP(+) + H2O = (2S,4S)-4-hydroxy-2,3,4,5-tetrahydrodipicolinate + NADPH + H(+)</text>
        <dbReference type="Rhea" id="RHEA:35331"/>
        <dbReference type="ChEBI" id="CHEBI:15377"/>
        <dbReference type="ChEBI" id="CHEBI:15378"/>
        <dbReference type="ChEBI" id="CHEBI:16845"/>
        <dbReference type="ChEBI" id="CHEBI:57783"/>
        <dbReference type="ChEBI" id="CHEBI:58349"/>
        <dbReference type="ChEBI" id="CHEBI:67139"/>
        <dbReference type="EC" id="1.17.1.8"/>
    </reaction>
</comment>
<comment type="pathway">
    <text evidence="1">Amino-acid biosynthesis; L-lysine biosynthesis via DAP pathway; (S)-tetrahydrodipicolinate from L-aspartate: step 4/4.</text>
</comment>
<comment type="subcellular location">
    <subcellularLocation>
        <location evidence="1">Cytoplasm</location>
    </subcellularLocation>
</comment>
<comment type="similarity">
    <text evidence="1">Belongs to the DapB family.</text>
</comment>
<comment type="caution">
    <text evidence="2">Was originally thought to be a dihydrodipicolinate reductase (DHDPR), catalyzing the conversion of dihydrodipicolinate to tetrahydrodipicolinate. However, it was shown in E.coli that the substrate of the enzymatic reaction is not dihydrodipicolinate (DHDP) but in fact (2S,4S)-4-hydroxy-2,3,4,5-tetrahydrodipicolinic acid (HTPA), the product released by the DapA-catalyzed reaction.</text>
</comment>
<protein>
    <recommendedName>
        <fullName evidence="1">4-hydroxy-tetrahydrodipicolinate reductase</fullName>
        <shortName evidence="1">HTPA reductase</shortName>
        <ecNumber evidence="1">1.17.1.8</ecNumber>
    </recommendedName>
</protein>
<organism>
    <name type="scientific">Wolinella succinogenes (strain ATCC 29543 / DSM 1740 / CCUG 13145 / JCM 31913 / LMG 7466 / NCTC 11488 / FDC 602W)</name>
    <name type="common">Vibrio succinogenes</name>
    <dbReference type="NCBI Taxonomy" id="273121"/>
    <lineage>
        <taxon>Bacteria</taxon>
        <taxon>Pseudomonadati</taxon>
        <taxon>Campylobacterota</taxon>
        <taxon>Epsilonproteobacteria</taxon>
        <taxon>Campylobacterales</taxon>
        <taxon>Helicobacteraceae</taxon>
        <taxon>Wolinella</taxon>
    </lineage>
</organism>